<feature type="chain" id="PRO_0000253942" description="Inorganic pyrophosphatase">
    <location>
        <begin position="1"/>
        <end position="12" status="greater than"/>
    </location>
</feature>
<feature type="non-terminal residue" evidence="3">
    <location>
        <position position="12"/>
    </location>
</feature>
<dbReference type="EC" id="3.6.1.1"/>
<dbReference type="SABIO-RK" id="P81988"/>
<dbReference type="GO" id="GO:0004427">
    <property type="term" value="F:inorganic diphosphate phosphatase activity"/>
    <property type="evidence" value="ECO:0007669"/>
    <property type="project" value="UniProtKB-EC"/>
</dbReference>
<reference evidence="4" key="1">
    <citation type="journal article" date="2006" name="Biochem. J.">
        <title>A novel subfamily of monomeric inorganic pyrophosphatases in photosynthetic eukaryotes.</title>
        <authorList>
            <person name="Gomez-Garcia M.R."/>
            <person name="Losada M."/>
            <person name="Serrano A."/>
        </authorList>
    </citation>
    <scope>PROTEIN SEQUENCE</scope>
    <scope>CATALYTIC ACTIVITY</scope>
    <scope>BIOPHYSICOCHEMICAL PROPERTIES</scope>
    <scope>SUBUNIT</scope>
    <source>
        <strain evidence="2">ATCC 30004 / UTEX LB 1298 / SAG 933-7</strain>
    </source>
</reference>
<accession>P81988</accession>
<sequence>XYAFGINGTXRI</sequence>
<keyword id="KW-0903">Direct protein sequencing</keyword>
<keyword id="KW-0378">Hydrolase</keyword>
<name>IPYR_OCHDN</name>
<organism>
    <name type="scientific">Ochromonas danica</name>
    <name type="common">Golden alga</name>
    <name type="synonym">Chlorochromonas danica</name>
    <dbReference type="NCBI Taxonomy" id="2986"/>
    <lineage>
        <taxon>Eukaryota</taxon>
        <taxon>Sar</taxon>
        <taxon>Stramenopiles</taxon>
        <taxon>Ochrophyta</taxon>
        <taxon>Chrysophyceae</taxon>
        <taxon>Chromulinales</taxon>
        <taxon>Chromulinaceae</taxon>
        <taxon>Ochromonas</taxon>
    </lineage>
</organism>
<protein>
    <recommendedName>
        <fullName>Inorganic pyrophosphatase</fullName>
        <ecNumber>3.6.1.1</ecNumber>
    </recommendedName>
    <alternativeName>
        <fullName>Pyrophosphate phospho-hydrolase</fullName>
        <shortName>PPase</shortName>
    </alternativeName>
</protein>
<proteinExistence type="evidence at protein level"/>
<comment type="catalytic activity">
    <reaction evidence="2">
        <text>diphosphate + H2O = 2 phosphate + H(+)</text>
        <dbReference type="Rhea" id="RHEA:24576"/>
        <dbReference type="ChEBI" id="CHEBI:15377"/>
        <dbReference type="ChEBI" id="CHEBI:15378"/>
        <dbReference type="ChEBI" id="CHEBI:33019"/>
        <dbReference type="ChEBI" id="CHEBI:43474"/>
        <dbReference type="EC" id="3.6.1.1"/>
    </reaction>
</comment>
<comment type="biophysicochemical properties">
    <kinetics>
        <KM evidence="2">29.2 uM for Mg2-PPi</KM>
    </kinetics>
</comment>
<comment type="subunit">
    <text evidence="2">Monomer.</text>
</comment>
<comment type="similarity">
    <text evidence="1">Belongs to the PPase family.</text>
</comment>
<evidence type="ECO:0000255" key="1"/>
<evidence type="ECO:0000269" key="2">
    <source>
    </source>
</evidence>
<evidence type="ECO:0000303" key="3">
    <source>
    </source>
</evidence>
<evidence type="ECO:0000305" key="4"/>